<reference key="1">
    <citation type="journal article" date="2008" name="Environ. Microbiol.">
        <title>The genome of Erwinia tasmaniensis strain Et1/99, a non-pathogenic bacterium in the genus Erwinia.</title>
        <authorList>
            <person name="Kube M."/>
            <person name="Migdoll A.M."/>
            <person name="Mueller I."/>
            <person name="Kuhl H."/>
            <person name="Beck A."/>
            <person name="Reinhardt R."/>
            <person name="Geider K."/>
        </authorList>
    </citation>
    <scope>NUCLEOTIDE SEQUENCE [LARGE SCALE GENOMIC DNA]</scope>
    <source>
        <strain>DSM 17950 / CFBP 7177 / CIP 109463 / NCPPB 4357 / Et1/99</strain>
    </source>
</reference>
<evidence type="ECO:0000255" key="1">
    <source>
        <dbReference type="HAMAP-Rule" id="MF_00539"/>
    </source>
</evidence>
<evidence type="ECO:0000256" key="2">
    <source>
        <dbReference type="SAM" id="MobiDB-lite"/>
    </source>
</evidence>
<evidence type="ECO:0000305" key="3"/>
<accession>B2VGT1</accession>
<organism>
    <name type="scientific">Erwinia tasmaniensis (strain DSM 17950 / CFBP 7177 / CIP 109463 / NCPPB 4357 / Et1/99)</name>
    <dbReference type="NCBI Taxonomy" id="465817"/>
    <lineage>
        <taxon>Bacteria</taxon>
        <taxon>Pseudomonadati</taxon>
        <taxon>Pseudomonadota</taxon>
        <taxon>Gammaproteobacteria</taxon>
        <taxon>Enterobacterales</taxon>
        <taxon>Erwiniaceae</taxon>
        <taxon>Erwinia</taxon>
    </lineage>
</organism>
<dbReference type="EMBL" id="CU468135">
    <property type="protein sequence ID" value="CAO95378.1"/>
    <property type="molecule type" value="Genomic_DNA"/>
</dbReference>
<dbReference type="RefSeq" id="WP_012440093.1">
    <property type="nucleotide sequence ID" value="NC_010694.1"/>
</dbReference>
<dbReference type="SMR" id="B2VGT1"/>
<dbReference type="STRING" id="465817.ETA_03320"/>
<dbReference type="KEGG" id="eta:ETA_03320"/>
<dbReference type="eggNOG" id="COG0211">
    <property type="taxonomic scope" value="Bacteria"/>
</dbReference>
<dbReference type="HOGENOM" id="CLU_095424_4_1_6"/>
<dbReference type="OrthoDB" id="9803474at2"/>
<dbReference type="Proteomes" id="UP000001726">
    <property type="component" value="Chromosome"/>
</dbReference>
<dbReference type="GO" id="GO:0022625">
    <property type="term" value="C:cytosolic large ribosomal subunit"/>
    <property type="evidence" value="ECO:0007669"/>
    <property type="project" value="TreeGrafter"/>
</dbReference>
<dbReference type="GO" id="GO:0003735">
    <property type="term" value="F:structural constituent of ribosome"/>
    <property type="evidence" value="ECO:0007669"/>
    <property type="project" value="InterPro"/>
</dbReference>
<dbReference type="GO" id="GO:0006412">
    <property type="term" value="P:translation"/>
    <property type="evidence" value="ECO:0007669"/>
    <property type="project" value="UniProtKB-UniRule"/>
</dbReference>
<dbReference type="FunFam" id="2.40.50.100:FF:000001">
    <property type="entry name" value="50S ribosomal protein L27"/>
    <property type="match status" value="1"/>
</dbReference>
<dbReference type="Gene3D" id="2.40.50.100">
    <property type="match status" value="1"/>
</dbReference>
<dbReference type="HAMAP" id="MF_00539">
    <property type="entry name" value="Ribosomal_bL27"/>
    <property type="match status" value="1"/>
</dbReference>
<dbReference type="InterPro" id="IPR001684">
    <property type="entry name" value="Ribosomal_bL27"/>
</dbReference>
<dbReference type="InterPro" id="IPR018261">
    <property type="entry name" value="Ribosomal_bL27_CS"/>
</dbReference>
<dbReference type="NCBIfam" id="TIGR00062">
    <property type="entry name" value="L27"/>
    <property type="match status" value="1"/>
</dbReference>
<dbReference type="PANTHER" id="PTHR15893:SF0">
    <property type="entry name" value="LARGE RIBOSOMAL SUBUNIT PROTEIN BL27M"/>
    <property type="match status" value="1"/>
</dbReference>
<dbReference type="PANTHER" id="PTHR15893">
    <property type="entry name" value="RIBOSOMAL PROTEIN L27"/>
    <property type="match status" value="1"/>
</dbReference>
<dbReference type="Pfam" id="PF01016">
    <property type="entry name" value="Ribosomal_L27"/>
    <property type="match status" value="1"/>
</dbReference>
<dbReference type="PRINTS" id="PR00063">
    <property type="entry name" value="RIBOSOMALL27"/>
</dbReference>
<dbReference type="SUPFAM" id="SSF110324">
    <property type="entry name" value="Ribosomal L27 protein-like"/>
    <property type="match status" value="1"/>
</dbReference>
<dbReference type="PROSITE" id="PS00831">
    <property type="entry name" value="RIBOSOMAL_L27"/>
    <property type="match status" value="1"/>
</dbReference>
<proteinExistence type="inferred from homology"/>
<gene>
    <name evidence="1" type="primary">rpmA</name>
    <name type="ordered locus">ETA_03320</name>
</gene>
<comment type="similarity">
    <text evidence="1">Belongs to the bacterial ribosomal protein bL27 family.</text>
</comment>
<feature type="chain" id="PRO_1000128749" description="Large ribosomal subunit protein bL27">
    <location>
        <begin position="1"/>
        <end position="85"/>
    </location>
</feature>
<feature type="region of interest" description="Disordered" evidence="2">
    <location>
        <begin position="1"/>
        <end position="21"/>
    </location>
</feature>
<name>RL27_ERWT9</name>
<sequence>MAHKKAGGSTRNGRDSNAKRLGVKRFGGETVLAGSIIVRQRGTKFHAGNNVGCGRDHTLFATANGKVQFEVKGPNNRKYISIVAE</sequence>
<protein>
    <recommendedName>
        <fullName evidence="1">Large ribosomal subunit protein bL27</fullName>
    </recommendedName>
    <alternativeName>
        <fullName evidence="3">50S ribosomal protein L27</fullName>
    </alternativeName>
</protein>
<keyword id="KW-1185">Reference proteome</keyword>
<keyword id="KW-0687">Ribonucleoprotein</keyword>
<keyword id="KW-0689">Ribosomal protein</keyword>